<organism>
    <name type="scientific">Staphylococcus aureus (strain NCTC 8325 / PS 47)</name>
    <dbReference type="NCBI Taxonomy" id="93061"/>
    <lineage>
        <taxon>Bacteria</taxon>
        <taxon>Bacillati</taxon>
        <taxon>Bacillota</taxon>
        <taxon>Bacilli</taxon>
        <taxon>Bacillales</taxon>
        <taxon>Staphylococcaceae</taxon>
        <taxon>Staphylococcus</taxon>
    </lineage>
</organism>
<protein>
    <recommendedName>
        <fullName evidence="1">Phosphoribosylformylglycinamidine cyclo-ligase</fullName>
        <ecNumber evidence="1">6.3.3.1</ecNumber>
    </recommendedName>
    <alternativeName>
        <fullName evidence="1">AIR synthase</fullName>
    </alternativeName>
    <alternativeName>
        <fullName evidence="1">AIRS</fullName>
    </alternativeName>
    <alternativeName>
        <fullName evidence="1">Phosphoribosyl-aminoimidazole synthetase</fullName>
    </alternativeName>
</protein>
<dbReference type="EC" id="6.3.3.1" evidence="1"/>
<dbReference type="EMBL" id="CP000253">
    <property type="protein sequence ID" value="ABD30137.1"/>
    <property type="molecule type" value="Genomic_DNA"/>
</dbReference>
<dbReference type="RefSeq" id="WP_000030812.1">
    <property type="nucleotide sequence ID" value="NZ_LS483365.1"/>
</dbReference>
<dbReference type="RefSeq" id="YP_499565.1">
    <property type="nucleotide sequence ID" value="NC_007795.1"/>
</dbReference>
<dbReference type="SMR" id="Q2FZI8"/>
<dbReference type="STRING" id="93061.SAOUHSC_01015"/>
<dbReference type="PaxDb" id="1280-SAXN108_1068"/>
<dbReference type="GeneID" id="3920276"/>
<dbReference type="KEGG" id="sao:SAOUHSC_01015"/>
<dbReference type="PATRIC" id="fig|93061.5.peg.930"/>
<dbReference type="eggNOG" id="COG0150">
    <property type="taxonomic scope" value="Bacteria"/>
</dbReference>
<dbReference type="HOGENOM" id="CLU_047116_0_0_9"/>
<dbReference type="OrthoDB" id="9802507at2"/>
<dbReference type="UniPathway" id="UPA00074">
    <property type="reaction ID" value="UER00129"/>
</dbReference>
<dbReference type="PRO" id="PR:Q2FZI8"/>
<dbReference type="Proteomes" id="UP000008816">
    <property type="component" value="Chromosome"/>
</dbReference>
<dbReference type="GO" id="GO:0005829">
    <property type="term" value="C:cytosol"/>
    <property type="evidence" value="ECO:0000318"/>
    <property type="project" value="GO_Central"/>
</dbReference>
<dbReference type="GO" id="GO:0005524">
    <property type="term" value="F:ATP binding"/>
    <property type="evidence" value="ECO:0007669"/>
    <property type="project" value="UniProtKB-KW"/>
</dbReference>
<dbReference type="GO" id="GO:0004637">
    <property type="term" value="F:phosphoribosylamine-glycine ligase activity"/>
    <property type="evidence" value="ECO:0000318"/>
    <property type="project" value="GO_Central"/>
</dbReference>
<dbReference type="GO" id="GO:0004641">
    <property type="term" value="F:phosphoribosylformylglycinamidine cyclo-ligase activity"/>
    <property type="evidence" value="ECO:0000318"/>
    <property type="project" value="GO_Central"/>
</dbReference>
<dbReference type="GO" id="GO:0006189">
    <property type="term" value="P:'de novo' IMP biosynthetic process"/>
    <property type="evidence" value="ECO:0007669"/>
    <property type="project" value="UniProtKB-UniRule"/>
</dbReference>
<dbReference type="GO" id="GO:0046084">
    <property type="term" value="P:adenine biosynthetic process"/>
    <property type="evidence" value="ECO:0000318"/>
    <property type="project" value="GO_Central"/>
</dbReference>
<dbReference type="GO" id="GO:0006164">
    <property type="term" value="P:purine nucleotide biosynthetic process"/>
    <property type="evidence" value="ECO:0000318"/>
    <property type="project" value="GO_Central"/>
</dbReference>
<dbReference type="CDD" id="cd02196">
    <property type="entry name" value="PurM"/>
    <property type="match status" value="1"/>
</dbReference>
<dbReference type="FunFam" id="3.30.1330.10:FF:000001">
    <property type="entry name" value="Phosphoribosylformylglycinamidine cyclo-ligase"/>
    <property type="match status" value="1"/>
</dbReference>
<dbReference type="FunFam" id="3.90.650.10:FF:000001">
    <property type="entry name" value="Phosphoribosylformylglycinamidine cyclo-ligase"/>
    <property type="match status" value="1"/>
</dbReference>
<dbReference type="Gene3D" id="3.90.650.10">
    <property type="entry name" value="PurM-like C-terminal domain"/>
    <property type="match status" value="1"/>
</dbReference>
<dbReference type="Gene3D" id="3.30.1330.10">
    <property type="entry name" value="PurM-like, N-terminal domain"/>
    <property type="match status" value="1"/>
</dbReference>
<dbReference type="HAMAP" id="MF_00741">
    <property type="entry name" value="AIRS"/>
    <property type="match status" value="1"/>
</dbReference>
<dbReference type="InterPro" id="IPR010918">
    <property type="entry name" value="PurM-like_C_dom"/>
</dbReference>
<dbReference type="InterPro" id="IPR036676">
    <property type="entry name" value="PurM-like_C_sf"/>
</dbReference>
<dbReference type="InterPro" id="IPR016188">
    <property type="entry name" value="PurM-like_N"/>
</dbReference>
<dbReference type="InterPro" id="IPR036921">
    <property type="entry name" value="PurM-like_N_sf"/>
</dbReference>
<dbReference type="InterPro" id="IPR004733">
    <property type="entry name" value="PurM_cligase"/>
</dbReference>
<dbReference type="NCBIfam" id="TIGR00878">
    <property type="entry name" value="purM"/>
    <property type="match status" value="1"/>
</dbReference>
<dbReference type="PANTHER" id="PTHR10520:SF12">
    <property type="entry name" value="TRIFUNCTIONAL PURINE BIOSYNTHETIC PROTEIN ADENOSINE-3"/>
    <property type="match status" value="1"/>
</dbReference>
<dbReference type="PANTHER" id="PTHR10520">
    <property type="entry name" value="TRIFUNCTIONAL PURINE BIOSYNTHETIC PROTEIN ADENOSINE-3-RELATED"/>
    <property type="match status" value="1"/>
</dbReference>
<dbReference type="Pfam" id="PF00586">
    <property type="entry name" value="AIRS"/>
    <property type="match status" value="1"/>
</dbReference>
<dbReference type="Pfam" id="PF02769">
    <property type="entry name" value="AIRS_C"/>
    <property type="match status" value="1"/>
</dbReference>
<dbReference type="SUPFAM" id="SSF56042">
    <property type="entry name" value="PurM C-terminal domain-like"/>
    <property type="match status" value="1"/>
</dbReference>
<dbReference type="SUPFAM" id="SSF55326">
    <property type="entry name" value="PurM N-terminal domain-like"/>
    <property type="match status" value="1"/>
</dbReference>
<keyword id="KW-0067">ATP-binding</keyword>
<keyword id="KW-0963">Cytoplasm</keyword>
<keyword id="KW-0436">Ligase</keyword>
<keyword id="KW-0547">Nucleotide-binding</keyword>
<keyword id="KW-0658">Purine biosynthesis</keyword>
<keyword id="KW-1185">Reference proteome</keyword>
<feature type="chain" id="PRO_0000258410" description="Phosphoribosylformylglycinamidine cyclo-ligase">
    <location>
        <begin position="1"/>
        <end position="342"/>
    </location>
</feature>
<accession>Q2FZI8</accession>
<proteinExistence type="inferred from homology"/>
<gene>
    <name evidence="1" type="primary">purM</name>
    <name type="ordered locus">SAOUHSC_01015</name>
</gene>
<evidence type="ECO:0000255" key="1">
    <source>
        <dbReference type="HAMAP-Rule" id="MF_00741"/>
    </source>
</evidence>
<comment type="catalytic activity">
    <reaction evidence="1">
        <text>2-formamido-N(1)-(5-O-phospho-beta-D-ribosyl)acetamidine + ATP = 5-amino-1-(5-phospho-beta-D-ribosyl)imidazole + ADP + phosphate + H(+)</text>
        <dbReference type="Rhea" id="RHEA:23032"/>
        <dbReference type="ChEBI" id="CHEBI:15378"/>
        <dbReference type="ChEBI" id="CHEBI:30616"/>
        <dbReference type="ChEBI" id="CHEBI:43474"/>
        <dbReference type="ChEBI" id="CHEBI:137981"/>
        <dbReference type="ChEBI" id="CHEBI:147287"/>
        <dbReference type="ChEBI" id="CHEBI:456216"/>
        <dbReference type="EC" id="6.3.3.1"/>
    </reaction>
</comment>
<comment type="pathway">
    <text evidence="1">Purine metabolism; IMP biosynthesis via de novo pathway; 5-amino-1-(5-phospho-D-ribosyl)imidazole from N(2)-formyl-N(1)-(5-phospho-D-ribosyl)glycinamide: step 2/2.</text>
</comment>
<comment type="subcellular location">
    <subcellularLocation>
        <location evidence="1">Cytoplasm</location>
    </subcellularLocation>
</comment>
<comment type="similarity">
    <text evidence="1">Belongs to the AIR synthase family.</text>
</comment>
<reference key="1">
    <citation type="book" date="2006" name="Gram positive pathogens, 2nd edition">
        <title>The Staphylococcus aureus NCTC 8325 genome.</title>
        <editorList>
            <person name="Fischetti V."/>
            <person name="Novick R."/>
            <person name="Ferretti J."/>
            <person name="Portnoy D."/>
            <person name="Rood J."/>
        </editorList>
        <authorList>
            <person name="Gillaspy A.F."/>
            <person name="Worrell V."/>
            <person name="Orvis J."/>
            <person name="Roe B.A."/>
            <person name="Dyer D.W."/>
            <person name="Iandolo J.J."/>
        </authorList>
    </citation>
    <scope>NUCLEOTIDE SEQUENCE [LARGE SCALE GENOMIC DNA]</scope>
    <source>
        <strain>NCTC 8325 / PS 47</strain>
    </source>
</reference>
<name>PUR5_STAA8</name>
<sequence>MSKAYEQSGVNIHAGYEAVERMSSHVKRTMRKEVIGGLGGFGATFDLSQLNMTAPVLVSGTDGVGTKLKLAIDYGKHDSIGIDAVAMCVNDILTTGAEPLYFLDYIATNKVVPEVIEQIVKGISDACVETNTALIGGETAEMGEMYHEGEYDVAGFAVGAVEKDDYVDGSEVKEGQVVIGLASSGIHSNGYSLVRKLINESGIDLASNFDNRPFIDVFLEPTKLYVKPVLALKKEVSIKAMNHITGGGFYENIPRALPAGYAARIDTTSFPTPKIFDWLQQQGNIDTNEMYNIFNMGIGYTVIVDEKDVSRALKILAEQNVEAYQIGHIVKNESTAIELLGV</sequence>